<comment type="similarity">
    <text evidence="1">Belongs to the bacterial ribosomal protein bL27 family.</text>
</comment>
<organism>
    <name type="scientific">Nitrosomonas europaea (strain ATCC 19718 / CIP 103999 / KCTC 2705 / NBRC 14298)</name>
    <dbReference type="NCBI Taxonomy" id="228410"/>
    <lineage>
        <taxon>Bacteria</taxon>
        <taxon>Pseudomonadati</taxon>
        <taxon>Pseudomonadota</taxon>
        <taxon>Betaproteobacteria</taxon>
        <taxon>Nitrosomonadales</taxon>
        <taxon>Nitrosomonadaceae</taxon>
        <taxon>Nitrosomonas</taxon>
    </lineage>
</organism>
<evidence type="ECO:0000255" key="1">
    <source>
        <dbReference type="HAMAP-Rule" id="MF_00539"/>
    </source>
</evidence>
<evidence type="ECO:0000256" key="2">
    <source>
        <dbReference type="SAM" id="MobiDB-lite"/>
    </source>
</evidence>
<evidence type="ECO:0000305" key="3"/>
<feature type="chain" id="PRO_0000181134" description="Large ribosomal subunit protein bL27">
    <location>
        <begin position="1"/>
        <end position="85"/>
    </location>
</feature>
<feature type="region of interest" description="Disordered" evidence="2">
    <location>
        <begin position="1"/>
        <end position="22"/>
    </location>
</feature>
<name>RL27_NITEU</name>
<protein>
    <recommendedName>
        <fullName evidence="1">Large ribosomal subunit protein bL27</fullName>
    </recommendedName>
    <alternativeName>
        <fullName evidence="3">50S ribosomal protein L27</fullName>
    </alternativeName>
</protein>
<accession>Q82V19</accession>
<proteinExistence type="inferred from homology"/>
<dbReference type="EMBL" id="AL954747">
    <property type="protein sequence ID" value="CAD85203.1"/>
    <property type="molecule type" value="Genomic_DNA"/>
</dbReference>
<dbReference type="RefSeq" id="WP_011111870.1">
    <property type="nucleotide sequence ID" value="NC_004757.1"/>
</dbReference>
<dbReference type="SMR" id="Q82V19"/>
<dbReference type="STRING" id="228410.NE1292"/>
<dbReference type="GeneID" id="87104467"/>
<dbReference type="KEGG" id="neu:NE1292"/>
<dbReference type="eggNOG" id="COG0211">
    <property type="taxonomic scope" value="Bacteria"/>
</dbReference>
<dbReference type="HOGENOM" id="CLU_095424_4_1_4"/>
<dbReference type="OrthoDB" id="9803474at2"/>
<dbReference type="PhylomeDB" id="Q82V19"/>
<dbReference type="Proteomes" id="UP000001416">
    <property type="component" value="Chromosome"/>
</dbReference>
<dbReference type="GO" id="GO:0022625">
    <property type="term" value="C:cytosolic large ribosomal subunit"/>
    <property type="evidence" value="ECO:0007669"/>
    <property type="project" value="TreeGrafter"/>
</dbReference>
<dbReference type="GO" id="GO:0003735">
    <property type="term" value="F:structural constituent of ribosome"/>
    <property type="evidence" value="ECO:0007669"/>
    <property type="project" value="InterPro"/>
</dbReference>
<dbReference type="GO" id="GO:0006412">
    <property type="term" value="P:translation"/>
    <property type="evidence" value="ECO:0007669"/>
    <property type="project" value="UniProtKB-UniRule"/>
</dbReference>
<dbReference type="FunFam" id="2.40.50.100:FF:000001">
    <property type="entry name" value="50S ribosomal protein L27"/>
    <property type="match status" value="1"/>
</dbReference>
<dbReference type="Gene3D" id="2.40.50.100">
    <property type="match status" value="1"/>
</dbReference>
<dbReference type="HAMAP" id="MF_00539">
    <property type="entry name" value="Ribosomal_bL27"/>
    <property type="match status" value="1"/>
</dbReference>
<dbReference type="InterPro" id="IPR001684">
    <property type="entry name" value="Ribosomal_bL27"/>
</dbReference>
<dbReference type="InterPro" id="IPR018261">
    <property type="entry name" value="Ribosomal_bL27_CS"/>
</dbReference>
<dbReference type="NCBIfam" id="TIGR00062">
    <property type="entry name" value="L27"/>
    <property type="match status" value="1"/>
</dbReference>
<dbReference type="PANTHER" id="PTHR15893:SF0">
    <property type="entry name" value="LARGE RIBOSOMAL SUBUNIT PROTEIN BL27M"/>
    <property type="match status" value="1"/>
</dbReference>
<dbReference type="PANTHER" id="PTHR15893">
    <property type="entry name" value="RIBOSOMAL PROTEIN L27"/>
    <property type="match status" value="1"/>
</dbReference>
<dbReference type="Pfam" id="PF01016">
    <property type="entry name" value="Ribosomal_L27"/>
    <property type="match status" value="1"/>
</dbReference>
<dbReference type="PRINTS" id="PR00063">
    <property type="entry name" value="RIBOSOMALL27"/>
</dbReference>
<dbReference type="SUPFAM" id="SSF110324">
    <property type="entry name" value="Ribosomal L27 protein-like"/>
    <property type="match status" value="1"/>
</dbReference>
<dbReference type="PROSITE" id="PS00831">
    <property type="entry name" value="RIBOSOMAL_L27"/>
    <property type="match status" value="1"/>
</dbReference>
<gene>
    <name evidence="1" type="primary">rpmA</name>
    <name type="ordered locus">NE1292</name>
</gene>
<reference key="1">
    <citation type="journal article" date="2003" name="J. Bacteriol.">
        <title>Complete genome sequence of the ammonia-oxidizing bacterium and obligate chemolithoautotroph Nitrosomonas europaea.</title>
        <authorList>
            <person name="Chain P."/>
            <person name="Lamerdin J.E."/>
            <person name="Larimer F.W."/>
            <person name="Regala W."/>
            <person name="Lao V."/>
            <person name="Land M.L."/>
            <person name="Hauser L."/>
            <person name="Hooper A.B."/>
            <person name="Klotz M.G."/>
            <person name="Norton J."/>
            <person name="Sayavedra-Soto L.A."/>
            <person name="Arciero D.M."/>
            <person name="Hommes N.G."/>
            <person name="Whittaker M.M."/>
            <person name="Arp D.J."/>
        </authorList>
    </citation>
    <scope>NUCLEOTIDE SEQUENCE [LARGE SCALE GENOMIC DNA]</scope>
    <source>
        <strain>ATCC 19718 / CIP 103999 / KCTC 2705 / NBRC 14298</strain>
    </source>
</reference>
<sequence length="85" mass="9207">MAHKKAGGSSRNGRDSHSKRLGVKRYGGEIIRAGGIIVRQRGTQFHPGDNVGIGRDHTLFAKVDGKIVFAVKGRMNRRTVAVIPS</sequence>
<keyword id="KW-1185">Reference proteome</keyword>
<keyword id="KW-0687">Ribonucleoprotein</keyword>
<keyword id="KW-0689">Ribosomal protein</keyword>